<protein>
    <recommendedName>
        <fullName>Alcohol dehydrogenase 3</fullName>
        <ecNumber evidence="2">1.1.1.1</ecNumber>
    </recommendedName>
</protein>
<dbReference type="EC" id="1.1.1.1" evidence="2"/>
<dbReference type="EMBL" id="X12734">
    <property type="protein sequence ID" value="CAA31231.1"/>
    <property type="molecule type" value="Genomic_DNA"/>
</dbReference>
<dbReference type="PIR" id="S04040">
    <property type="entry name" value="S04040"/>
</dbReference>
<dbReference type="SMR" id="P10848"/>
<dbReference type="ExpressionAtlas" id="P10848">
    <property type="expression patterns" value="baseline and differential"/>
</dbReference>
<dbReference type="GO" id="GO:0005829">
    <property type="term" value="C:cytosol"/>
    <property type="evidence" value="ECO:0007669"/>
    <property type="project" value="TreeGrafter"/>
</dbReference>
<dbReference type="GO" id="GO:0004022">
    <property type="term" value="F:alcohol dehydrogenase (NAD+) activity"/>
    <property type="evidence" value="ECO:0007669"/>
    <property type="project" value="UniProtKB-EC"/>
</dbReference>
<dbReference type="GO" id="GO:0051903">
    <property type="term" value="F:S-(hydroxymethyl)glutathione dehydrogenase [NAD(P)+] activity"/>
    <property type="evidence" value="ECO:0007669"/>
    <property type="project" value="TreeGrafter"/>
</dbReference>
<dbReference type="GO" id="GO:0008270">
    <property type="term" value="F:zinc ion binding"/>
    <property type="evidence" value="ECO:0007669"/>
    <property type="project" value="InterPro"/>
</dbReference>
<dbReference type="GO" id="GO:0046294">
    <property type="term" value="P:formaldehyde catabolic process"/>
    <property type="evidence" value="ECO:0007669"/>
    <property type="project" value="TreeGrafter"/>
</dbReference>
<dbReference type="CDD" id="cd08301">
    <property type="entry name" value="alcohol_DH_plants"/>
    <property type="match status" value="1"/>
</dbReference>
<dbReference type="FunFam" id="3.90.180.10:FF:000067">
    <property type="entry name" value="alcohol dehydrogenase 1-like isoform X1"/>
    <property type="match status" value="1"/>
</dbReference>
<dbReference type="FunFam" id="3.40.50.720:FF:001292">
    <property type="entry name" value="Alcohol dehydrogenase class-P"/>
    <property type="match status" value="1"/>
</dbReference>
<dbReference type="Gene3D" id="3.90.180.10">
    <property type="entry name" value="Medium-chain alcohol dehydrogenases, catalytic domain"/>
    <property type="match status" value="1"/>
</dbReference>
<dbReference type="Gene3D" id="3.40.50.720">
    <property type="entry name" value="NAD(P)-binding Rossmann-like Domain"/>
    <property type="match status" value="1"/>
</dbReference>
<dbReference type="InterPro" id="IPR013149">
    <property type="entry name" value="ADH-like_C"/>
</dbReference>
<dbReference type="InterPro" id="IPR013154">
    <property type="entry name" value="ADH-like_N"/>
</dbReference>
<dbReference type="InterPro" id="IPR002328">
    <property type="entry name" value="ADH_Zn_CS"/>
</dbReference>
<dbReference type="InterPro" id="IPR011032">
    <property type="entry name" value="GroES-like_sf"/>
</dbReference>
<dbReference type="InterPro" id="IPR036291">
    <property type="entry name" value="NAD(P)-bd_dom_sf"/>
</dbReference>
<dbReference type="InterPro" id="IPR020843">
    <property type="entry name" value="PKS_ER"/>
</dbReference>
<dbReference type="PANTHER" id="PTHR43880">
    <property type="entry name" value="ALCOHOL DEHYDROGENASE"/>
    <property type="match status" value="1"/>
</dbReference>
<dbReference type="PANTHER" id="PTHR43880:SF37">
    <property type="entry name" value="ALCOHOL DEHYDROGENASE ADH3D"/>
    <property type="match status" value="1"/>
</dbReference>
<dbReference type="Pfam" id="PF08240">
    <property type="entry name" value="ADH_N"/>
    <property type="match status" value="1"/>
</dbReference>
<dbReference type="Pfam" id="PF00107">
    <property type="entry name" value="ADH_zinc_N"/>
    <property type="match status" value="1"/>
</dbReference>
<dbReference type="SMART" id="SM00829">
    <property type="entry name" value="PKS_ER"/>
    <property type="match status" value="1"/>
</dbReference>
<dbReference type="SUPFAM" id="SSF50129">
    <property type="entry name" value="GroES-like"/>
    <property type="match status" value="2"/>
</dbReference>
<dbReference type="SUPFAM" id="SSF51735">
    <property type="entry name" value="NAD(P)-binding Rossmann-fold domains"/>
    <property type="match status" value="1"/>
</dbReference>
<dbReference type="PROSITE" id="PS00059">
    <property type="entry name" value="ADH_ZINC"/>
    <property type="match status" value="1"/>
</dbReference>
<name>ADH3_HORVU</name>
<accession>P10848</accession>
<proteinExistence type="inferred from homology"/>
<reference key="1">
    <citation type="journal article" date="1988" name="Plant Mol. Biol.">
        <title>Molecular analysis of the alcohol dehydrogenase gene family of barley.</title>
        <authorList>
            <person name="Trick M."/>
            <person name="Dennis E.S."/>
            <person name="Edwards K.J.R."/>
            <person name="Peacock W.J."/>
        </authorList>
        <dbReference type="AGRICOLA" id="IND92000066"/>
    </citation>
    <scope>NUCLEOTIDE SEQUENCE [GENOMIC DNA]</scope>
    <scope>HOMODIMER</scope>
    <source>
        <strain>cv. Proctor</strain>
    </source>
</reference>
<gene>
    <name type="primary">ADH3</name>
</gene>
<comment type="catalytic activity">
    <reaction evidence="2">
        <text>a primary alcohol + NAD(+) = an aldehyde + NADH + H(+)</text>
        <dbReference type="Rhea" id="RHEA:10736"/>
        <dbReference type="ChEBI" id="CHEBI:15378"/>
        <dbReference type="ChEBI" id="CHEBI:15734"/>
        <dbReference type="ChEBI" id="CHEBI:17478"/>
        <dbReference type="ChEBI" id="CHEBI:57540"/>
        <dbReference type="ChEBI" id="CHEBI:57945"/>
        <dbReference type="EC" id="1.1.1.1"/>
    </reaction>
</comment>
<comment type="catalytic activity">
    <reaction evidence="2">
        <text>a secondary alcohol + NAD(+) = a ketone + NADH + H(+)</text>
        <dbReference type="Rhea" id="RHEA:10740"/>
        <dbReference type="ChEBI" id="CHEBI:15378"/>
        <dbReference type="ChEBI" id="CHEBI:17087"/>
        <dbReference type="ChEBI" id="CHEBI:35681"/>
        <dbReference type="ChEBI" id="CHEBI:57540"/>
        <dbReference type="ChEBI" id="CHEBI:57945"/>
        <dbReference type="EC" id="1.1.1.1"/>
    </reaction>
</comment>
<comment type="cofactor">
    <cofactor evidence="2">
        <name>Zn(2+)</name>
        <dbReference type="ChEBI" id="CHEBI:29105"/>
    </cofactor>
    <text evidence="2">Binds 2 Zn(2+) ions per subunit.</text>
</comment>
<comment type="subunit">
    <text evidence="3">Homodimer.</text>
</comment>
<comment type="subcellular location">
    <subcellularLocation>
        <location evidence="2">Cytoplasm</location>
    </subcellularLocation>
</comment>
<comment type="similarity">
    <text evidence="4">Belongs to the zinc-containing alcohol dehydrogenase family.</text>
</comment>
<feature type="chain" id="PRO_0000160701" description="Alcohol dehydrogenase 3">
    <location>
        <begin position="1"/>
        <end position="379"/>
    </location>
</feature>
<feature type="binding site" evidence="2">
    <location>
        <position position="47"/>
    </location>
    <ligand>
        <name>Zn(2+)</name>
        <dbReference type="ChEBI" id="CHEBI:29105"/>
        <label>1</label>
        <note>catalytic</note>
    </ligand>
</feature>
<feature type="binding site" evidence="2">
    <location>
        <position position="49"/>
    </location>
    <ligand>
        <name>an alcohol</name>
        <dbReference type="ChEBI" id="CHEBI:30879"/>
    </ligand>
</feature>
<feature type="binding site" evidence="2">
    <location>
        <position position="49"/>
    </location>
    <ligand>
        <name>NAD(+)</name>
        <dbReference type="ChEBI" id="CHEBI:57540"/>
    </ligand>
</feature>
<feature type="binding site" evidence="2">
    <location>
        <position position="49"/>
    </location>
    <ligand>
        <name>Zn(2+)</name>
        <dbReference type="ChEBI" id="CHEBI:29105"/>
        <label>1</label>
        <note>catalytic</note>
    </ligand>
</feature>
<feature type="binding site" evidence="1">
    <location>
        <position position="69"/>
    </location>
    <ligand>
        <name>an alcohol</name>
        <dbReference type="ChEBI" id="CHEBI:30879"/>
    </ligand>
</feature>
<feature type="binding site" evidence="2">
    <location>
        <position position="69"/>
    </location>
    <ligand>
        <name>Zn(2+)</name>
        <dbReference type="ChEBI" id="CHEBI:29105"/>
        <label>1</label>
        <note>catalytic</note>
    </ligand>
</feature>
<feature type="binding site" evidence="2">
    <location>
        <position position="99"/>
    </location>
    <ligand>
        <name>Zn(2+)</name>
        <dbReference type="ChEBI" id="CHEBI:29105"/>
        <label>2</label>
    </ligand>
</feature>
<feature type="binding site" evidence="2">
    <location>
        <position position="102"/>
    </location>
    <ligand>
        <name>Zn(2+)</name>
        <dbReference type="ChEBI" id="CHEBI:29105"/>
        <label>2</label>
    </ligand>
</feature>
<feature type="binding site" evidence="2">
    <location>
        <position position="105"/>
    </location>
    <ligand>
        <name>Zn(2+)</name>
        <dbReference type="ChEBI" id="CHEBI:29105"/>
        <label>2</label>
    </ligand>
</feature>
<feature type="binding site" evidence="2">
    <location>
        <position position="113"/>
    </location>
    <ligand>
        <name>Zn(2+)</name>
        <dbReference type="ChEBI" id="CHEBI:29105"/>
        <label>2</label>
    </ligand>
</feature>
<feature type="binding site" evidence="2">
    <location>
        <position position="177"/>
    </location>
    <ligand>
        <name>Zn(2+)</name>
        <dbReference type="ChEBI" id="CHEBI:29105"/>
        <label>1</label>
        <note>catalytic</note>
    </ligand>
</feature>
<feature type="binding site" evidence="2">
    <location>
        <begin position="202"/>
        <end position="207"/>
    </location>
    <ligand>
        <name>NAD(+)</name>
        <dbReference type="ChEBI" id="CHEBI:57540"/>
    </ligand>
</feature>
<feature type="binding site" evidence="2">
    <location>
        <position position="226"/>
    </location>
    <ligand>
        <name>NAD(+)</name>
        <dbReference type="ChEBI" id="CHEBI:57540"/>
    </ligand>
</feature>
<feature type="binding site" evidence="2">
    <location>
        <position position="231"/>
    </location>
    <ligand>
        <name>NAD(+)</name>
        <dbReference type="ChEBI" id="CHEBI:57540"/>
    </ligand>
</feature>
<feature type="binding site" evidence="2">
    <location>
        <position position="272"/>
    </location>
    <ligand>
        <name>NAD(+)</name>
        <dbReference type="ChEBI" id="CHEBI:57540"/>
    </ligand>
</feature>
<feature type="binding site" evidence="1">
    <location>
        <begin position="295"/>
        <end position="297"/>
    </location>
    <ligand>
        <name>NAD(+)</name>
        <dbReference type="ChEBI" id="CHEBI:57540"/>
    </ligand>
</feature>
<feature type="binding site" evidence="2">
    <location>
        <position position="295"/>
    </location>
    <ligand>
        <name>NAD(+)</name>
        <dbReference type="ChEBI" id="CHEBI:57540"/>
    </ligand>
</feature>
<feature type="binding site" evidence="2">
    <location>
        <position position="322"/>
    </location>
    <ligand>
        <name>NAD(+)</name>
        <dbReference type="ChEBI" id="CHEBI:57540"/>
    </ligand>
</feature>
<feature type="binding site" evidence="2">
    <location>
        <position position="372"/>
    </location>
    <ligand>
        <name>NAD(+)</name>
        <dbReference type="ChEBI" id="CHEBI:57540"/>
    </ligand>
</feature>
<keyword id="KW-0963">Cytoplasm</keyword>
<keyword id="KW-0479">Metal-binding</keyword>
<keyword id="KW-0520">NAD</keyword>
<keyword id="KW-0560">Oxidoreductase</keyword>
<keyword id="KW-0862">Zinc</keyword>
<sequence>MATAGKVIKCKAAVAWEAGKPLSIEEVEVAPPQAMEVRVKILYTALCHTDVYFWEAKGQTPVFPRILGHEAGGIVESVGEGVTELVPGDHVLPVFTGECKDCAHCKSEESNLCDLLRINVDRGVMIGDGQSRFTINGKPIFHFVGTSTFSEYTVIHVGCLAKINPEAPLDKVCVLSCGLSTGLGATLNVAKPKKGSTVAIFGLGAVGLAAMEGARMAGASRIIGVDLNPAKYEQAKKFGCTDFVNPKDHTKPVQEVLVEMTNGGVDRAVECTGHIDAMIATFECVHDGWGVAVLVGVPHKEAVFKTHPMNFLNEKTLKGTFFGNYKPRTDLPEVVEMYMRKELDLEKFITHSVPFSQINTAFDLMLKGEGLRCITRTDQ</sequence>
<organism>
    <name type="scientific">Hordeum vulgare</name>
    <name type="common">Barley</name>
    <dbReference type="NCBI Taxonomy" id="4513"/>
    <lineage>
        <taxon>Eukaryota</taxon>
        <taxon>Viridiplantae</taxon>
        <taxon>Streptophyta</taxon>
        <taxon>Embryophyta</taxon>
        <taxon>Tracheophyta</taxon>
        <taxon>Spermatophyta</taxon>
        <taxon>Magnoliopsida</taxon>
        <taxon>Liliopsida</taxon>
        <taxon>Poales</taxon>
        <taxon>Poaceae</taxon>
        <taxon>BOP clade</taxon>
        <taxon>Pooideae</taxon>
        <taxon>Triticodae</taxon>
        <taxon>Triticeae</taxon>
        <taxon>Hordeinae</taxon>
        <taxon>Hordeum</taxon>
    </lineage>
</organism>
<evidence type="ECO:0000250" key="1">
    <source>
        <dbReference type="UniProtKB" id="P00327"/>
    </source>
</evidence>
<evidence type="ECO:0000250" key="2">
    <source>
        <dbReference type="UniProtKB" id="P06525"/>
    </source>
</evidence>
<evidence type="ECO:0000269" key="3">
    <source ref="1"/>
</evidence>
<evidence type="ECO:0000305" key="4"/>